<proteinExistence type="inferred from homology"/>
<organism>
    <name type="scientific">Prochlorococcus marinus (strain MIT 9215)</name>
    <dbReference type="NCBI Taxonomy" id="93060"/>
    <lineage>
        <taxon>Bacteria</taxon>
        <taxon>Bacillati</taxon>
        <taxon>Cyanobacteriota</taxon>
        <taxon>Cyanophyceae</taxon>
        <taxon>Synechococcales</taxon>
        <taxon>Prochlorococcaceae</taxon>
        <taxon>Prochlorococcus</taxon>
    </lineage>
</organism>
<feature type="chain" id="PRO_0000350315" description="Probable dual-specificity RNA methyltransferase RlmN">
    <location>
        <begin position="1"/>
        <end position="348"/>
    </location>
</feature>
<feature type="domain" description="Radical SAM core" evidence="2">
    <location>
        <begin position="99"/>
        <end position="333"/>
    </location>
</feature>
<feature type="active site" description="Proton acceptor" evidence="1">
    <location>
        <position position="93"/>
    </location>
</feature>
<feature type="active site" description="S-methylcysteine intermediate" evidence="1">
    <location>
        <position position="338"/>
    </location>
</feature>
<feature type="binding site" evidence="1">
    <location>
        <position position="113"/>
    </location>
    <ligand>
        <name>[4Fe-4S] cluster</name>
        <dbReference type="ChEBI" id="CHEBI:49883"/>
        <note>4Fe-4S-S-AdoMet</note>
    </ligand>
</feature>
<feature type="binding site" evidence="1">
    <location>
        <position position="117"/>
    </location>
    <ligand>
        <name>[4Fe-4S] cluster</name>
        <dbReference type="ChEBI" id="CHEBI:49883"/>
        <note>4Fe-4S-S-AdoMet</note>
    </ligand>
</feature>
<feature type="binding site" evidence="1">
    <location>
        <position position="120"/>
    </location>
    <ligand>
        <name>[4Fe-4S] cluster</name>
        <dbReference type="ChEBI" id="CHEBI:49883"/>
        <note>4Fe-4S-S-AdoMet</note>
    </ligand>
</feature>
<feature type="binding site" evidence="1">
    <location>
        <begin position="160"/>
        <end position="161"/>
    </location>
    <ligand>
        <name>S-adenosyl-L-methionine</name>
        <dbReference type="ChEBI" id="CHEBI:59789"/>
    </ligand>
</feature>
<feature type="binding site" evidence="1">
    <location>
        <position position="190"/>
    </location>
    <ligand>
        <name>S-adenosyl-L-methionine</name>
        <dbReference type="ChEBI" id="CHEBI:59789"/>
    </ligand>
</feature>
<feature type="binding site" evidence="1">
    <location>
        <begin position="219"/>
        <end position="221"/>
    </location>
    <ligand>
        <name>S-adenosyl-L-methionine</name>
        <dbReference type="ChEBI" id="CHEBI:59789"/>
    </ligand>
</feature>
<feature type="binding site" evidence="1">
    <location>
        <position position="295"/>
    </location>
    <ligand>
        <name>S-adenosyl-L-methionine</name>
        <dbReference type="ChEBI" id="CHEBI:59789"/>
    </ligand>
</feature>
<feature type="disulfide bond" description="(transient)" evidence="1">
    <location>
        <begin position="106"/>
        <end position="338"/>
    </location>
</feature>
<keyword id="KW-0004">4Fe-4S</keyword>
<keyword id="KW-0963">Cytoplasm</keyword>
<keyword id="KW-1015">Disulfide bond</keyword>
<keyword id="KW-0408">Iron</keyword>
<keyword id="KW-0411">Iron-sulfur</keyword>
<keyword id="KW-0479">Metal-binding</keyword>
<keyword id="KW-0489">Methyltransferase</keyword>
<keyword id="KW-0698">rRNA processing</keyword>
<keyword id="KW-0949">S-adenosyl-L-methionine</keyword>
<keyword id="KW-0808">Transferase</keyword>
<keyword id="KW-0819">tRNA processing</keyword>
<protein>
    <recommendedName>
        <fullName evidence="1">Probable dual-specificity RNA methyltransferase RlmN</fullName>
        <ecNumber evidence="1">2.1.1.192</ecNumber>
    </recommendedName>
    <alternativeName>
        <fullName evidence="1">23S rRNA (adenine(2503)-C(2))-methyltransferase</fullName>
    </alternativeName>
    <alternativeName>
        <fullName evidence="1">23S rRNA m2A2503 methyltransferase</fullName>
    </alternativeName>
    <alternativeName>
        <fullName evidence="1">Ribosomal RNA large subunit methyltransferase N</fullName>
    </alternativeName>
    <alternativeName>
        <fullName evidence="1">tRNA (adenine(37)-C(2))-methyltransferase</fullName>
    </alternativeName>
    <alternativeName>
        <fullName evidence="1">tRNA m2A37 methyltransferase</fullName>
    </alternativeName>
</protein>
<dbReference type="EC" id="2.1.1.192" evidence="1"/>
<dbReference type="EMBL" id="CP000825">
    <property type="protein sequence ID" value="ABV51363.1"/>
    <property type="molecule type" value="Genomic_DNA"/>
</dbReference>
<dbReference type="RefSeq" id="WP_012008382.1">
    <property type="nucleotide sequence ID" value="NC_009840.1"/>
</dbReference>
<dbReference type="SMR" id="A8G6Y2"/>
<dbReference type="STRING" id="93060.P9215_17501"/>
<dbReference type="KEGG" id="pmh:P9215_17501"/>
<dbReference type="eggNOG" id="COG0820">
    <property type="taxonomic scope" value="Bacteria"/>
</dbReference>
<dbReference type="HOGENOM" id="CLU_029101_1_1_3"/>
<dbReference type="OrthoDB" id="9793973at2"/>
<dbReference type="Proteomes" id="UP000002014">
    <property type="component" value="Chromosome"/>
</dbReference>
<dbReference type="GO" id="GO:0005737">
    <property type="term" value="C:cytoplasm"/>
    <property type="evidence" value="ECO:0007669"/>
    <property type="project" value="UniProtKB-SubCell"/>
</dbReference>
<dbReference type="GO" id="GO:0051539">
    <property type="term" value="F:4 iron, 4 sulfur cluster binding"/>
    <property type="evidence" value="ECO:0007669"/>
    <property type="project" value="UniProtKB-UniRule"/>
</dbReference>
<dbReference type="GO" id="GO:0046872">
    <property type="term" value="F:metal ion binding"/>
    <property type="evidence" value="ECO:0007669"/>
    <property type="project" value="UniProtKB-KW"/>
</dbReference>
<dbReference type="GO" id="GO:0070040">
    <property type="term" value="F:rRNA (adenine(2503)-C2-)-methyltransferase activity"/>
    <property type="evidence" value="ECO:0007669"/>
    <property type="project" value="UniProtKB-UniRule"/>
</dbReference>
<dbReference type="GO" id="GO:0019843">
    <property type="term" value="F:rRNA binding"/>
    <property type="evidence" value="ECO:0007669"/>
    <property type="project" value="UniProtKB-UniRule"/>
</dbReference>
<dbReference type="GO" id="GO:0002935">
    <property type="term" value="F:tRNA (adenine(37)-C2)-methyltransferase activity"/>
    <property type="evidence" value="ECO:0007669"/>
    <property type="project" value="UniProtKB-UniRule"/>
</dbReference>
<dbReference type="GO" id="GO:0000049">
    <property type="term" value="F:tRNA binding"/>
    <property type="evidence" value="ECO:0007669"/>
    <property type="project" value="UniProtKB-UniRule"/>
</dbReference>
<dbReference type="GO" id="GO:0070475">
    <property type="term" value="P:rRNA base methylation"/>
    <property type="evidence" value="ECO:0007669"/>
    <property type="project" value="UniProtKB-UniRule"/>
</dbReference>
<dbReference type="GO" id="GO:0030488">
    <property type="term" value="P:tRNA methylation"/>
    <property type="evidence" value="ECO:0007669"/>
    <property type="project" value="UniProtKB-UniRule"/>
</dbReference>
<dbReference type="CDD" id="cd01335">
    <property type="entry name" value="Radical_SAM"/>
    <property type="match status" value="1"/>
</dbReference>
<dbReference type="FunFam" id="3.20.20.70:FF:000014">
    <property type="entry name" value="Probable dual-specificity RNA methyltransferase RlmN"/>
    <property type="match status" value="1"/>
</dbReference>
<dbReference type="Gene3D" id="1.10.150.530">
    <property type="match status" value="1"/>
</dbReference>
<dbReference type="Gene3D" id="3.20.20.70">
    <property type="entry name" value="Aldolase class I"/>
    <property type="match status" value="1"/>
</dbReference>
<dbReference type="HAMAP" id="MF_01849">
    <property type="entry name" value="RNA_methyltr_RlmN"/>
    <property type="match status" value="1"/>
</dbReference>
<dbReference type="InterPro" id="IPR013785">
    <property type="entry name" value="Aldolase_TIM"/>
</dbReference>
<dbReference type="InterPro" id="IPR040072">
    <property type="entry name" value="Methyltransferase_A"/>
</dbReference>
<dbReference type="InterPro" id="IPR048641">
    <property type="entry name" value="RlmN_N"/>
</dbReference>
<dbReference type="InterPro" id="IPR027492">
    <property type="entry name" value="RNA_MTrfase_RlmN"/>
</dbReference>
<dbReference type="InterPro" id="IPR004383">
    <property type="entry name" value="rRNA_lsu_MTrfase_RlmN/Cfr"/>
</dbReference>
<dbReference type="InterPro" id="IPR007197">
    <property type="entry name" value="rSAM"/>
</dbReference>
<dbReference type="NCBIfam" id="TIGR00048">
    <property type="entry name" value="rRNA_mod_RlmN"/>
    <property type="match status" value="1"/>
</dbReference>
<dbReference type="PANTHER" id="PTHR30544">
    <property type="entry name" value="23S RRNA METHYLTRANSFERASE"/>
    <property type="match status" value="1"/>
</dbReference>
<dbReference type="PANTHER" id="PTHR30544:SF5">
    <property type="entry name" value="RADICAL SAM CORE DOMAIN-CONTAINING PROTEIN"/>
    <property type="match status" value="1"/>
</dbReference>
<dbReference type="Pfam" id="PF13353">
    <property type="entry name" value="Fer4_12"/>
    <property type="match status" value="1"/>
</dbReference>
<dbReference type="Pfam" id="PF04055">
    <property type="entry name" value="Radical_SAM"/>
    <property type="match status" value="1"/>
</dbReference>
<dbReference type="Pfam" id="PF21016">
    <property type="entry name" value="RlmN_N"/>
    <property type="match status" value="1"/>
</dbReference>
<dbReference type="PIRSF" id="PIRSF006004">
    <property type="entry name" value="CHP00048"/>
    <property type="match status" value="1"/>
</dbReference>
<dbReference type="SFLD" id="SFLDF00275">
    <property type="entry name" value="adenosine_C2_methyltransferase"/>
    <property type="match status" value="1"/>
</dbReference>
<dbReference type="SFLD" id="SFLDG01062">
    <property type="entry name" value="methyltransferase_(Class_A)"/>
    <property type="match status" value="1"/>
</dbReference>
<dbReference type="SUPFAM" id="SSF102114">
    <property type="entry name" value="Radical SAM enzymes"/>
    <property type="match status" value="1"/>
</dbReference>
<dbReference type="PROSITE" id="PS51918">
    <property type="entry name" value="RADICAL_SAM"/>
    <property type="match status" value="1"/>
</dbReference>
<accession>A8G6Y2</accession>
<evidence type="ECO:0000255" key="1">
    <source>
        <dbReference type="HAMAP-Rule" id="MF_01849"/>
    </source>
</evidence>
<evidence type="ECO:0000255" key="2">
    <source>
        <dbReference type="PROSITE-ProRule" id="PRU01266"/>
    </source>
</evidence>
<sequence length="348" mass="39389">MKNLLGSSVKDLENVALEYGQAAFRGRQIHNWIYNYRNKKKSIDQIEALPLDFRKKLKDDGFKLSELSVQERNLANDGTLKLLLSANDNESIECVGIPTEKRLTACLSSQVGCPMDCKFCATGKEGLKRSLKASEILDQILFIENEMNRKVTNIVFMGMGEPLLNIDDLLVSIRSINKDFQISQRKITVSTVAVPKMINKLSAKSFQILGNCQFTLAISLHASNQKIRETIIPSAKNYEIENIIEDCKQYVRDTGRRVSFEYLMLSGVNDKLEHANELSNLLRGFQCHVNLIQYNQIDEVEFQRTSLKSLQSFQSRLSHNGIAVSLRKSRGLDKNAACGQLRQNANHQ</sequence>
<reference key="1">
    <citation type="journal article" date="2007" name="PLoS Genet.">
        <title>Patterns and implications of gene gain and loss in the evolution of Prochlorococcus.</title>
        <authorList>
            <person name="Kettler G.C."/>
            <person name="Martiny A.C."/>
            <person name="Huang K."/>
            <person name="Zucker J."/>
            <person name="Coleman M.L."/>
            <person name="Rodrigue S."/>
            <person name="Chen F."/>
            <person name="Lapidus A."/>
            <person name="Ferriera S."/>
            <person name="Johnson J."/>
            <person name="Steglich C."/>
            <person name="Church G.M."/>
            <person name="Richardson P."/>
            <person name="Chisholm S.W."/>
        </authorList>
    </citation>
    <scope>NUCLEOTIDE SEQUENCE [LARGE SCALE GENOMIC DNA]</scope>
    <source>
        <strain>MIT 9215</strain>
    </source>
</reference>
<gene>
    <name evidence="1" type="primary">rlmN</name>
    <name type="ordered locus">P9215_17501</name>
</gene>
<comment type="function">
    <text evidence="1">Specifically methylates position 2 of adenine 2503 in 23S rRNA and position 2 of adenine 37 in tRNAs.</text>
</comment>
<comment type="catalytic activity">
    <reaction evidence="1">
        <text>adenosine(2503) in 23S rRNA + 2 reduced [2Fe-2S]-[ferredoxin] + 2 S-adenosyl-L-methionine = 2-methyladenosine(2503) in 23S rRNA + 5'-deoxyadenosine + L-methionine + 2 oxidized [2Fe-2S]-[ferredoxin] + S-adenosyl-L-homocysteine</text>
        <dbReference type="Rhea" id="RHEA:42916"/>
        <dbReference type="Rhea" id="RHEA-COMP:10000"/>
        <dbReference type="Rhea" id="RHEA-COMP:10001"/>
        <dbReference type="Rhea" id="RHEA-COMP:10152"/>
        <dbReference type="Rhea" id="RHEA-COMP:10282"/>
        <dbReference type="ChEBI" id="CHEBI:17319"/>
        <dbReference type="ChEBI" id="CHEBI:33737"/>
        <dbReference type="ChEBI" id="CHEBI:33738"/>
        <dbReference type="ChEBI" id="CHEBI:57844"/>
        <dbReference type="ChEBI" id="CHEBI:57856"/>
        <dbReference type="ChEBI" id="CHEBI:59789"/>
        <dbReference type="ChEBI" id="CHEBI:74411"/>
        <dbReference type="ChEBI" id="CHEBI:74497"/>
        <dbReference type="EC" id="2.1.1.192"/>
    </reaction>
</comment>
<comment type="catalytic activity">
    <reaction evidence="1">
        <text>adenosine(37) in tRNA + 2 reduced [2Fe-2S]-[ferredoxin] + 2 S-adenosyl-L-methionine = 2-methyladenosine(37) in tRNA + 5'-deoxyadenosine + L-methionine + 2 oxidized [2Fe-2S]-[ferredoxin] + S-adenosyl-L-homocysteine</text>
        <dbReference type="Rhea" id="RHEA:43332"/>
        <dbReference type="Rhea" id="RHEA-COMP:10000"/>
        <dbReference type="Rhea" id="RHEA-COMP:10001"/>
        <dbReference type="Rhea" id="RHEA-COMP:10162"/>
        <dbReference type="Rhea" id="RHEA-COMP:10485"/>
        <dbReference type="ChEBI" id="CHEBI:17319"/>
        <dbReference type="ChEBI" id="CHEBI:33737"/>
        <dbReference type="ChEBI" id="CHEBI:33738"/>
        <dbReference type="ChEBI" id="CHEBI:57844"/>
        <dbReference type="ChEBI" id="CHEBI:57856"/>
        <dbReference type="ChEBI" id="CHEBI:59789"/>
        <dbReference type="ChEBI" id="CHEBI:74411"/>
        <dbReference type="ChEBI" id="CHEBI:74497"/>
        <dbReference type="EC" id="2.1.1.192"/>
    </reaction>
</comment>
<comment type="cofactor">
    <cofactor evidence="1">
        <name>[4Fe-4S] cluster</name>
        <dbReference type="ChEBI" id="CHEBI:49883"/>
    </cofactor>
    <text evidence="1">Binds 1 [4Fe-4S] cluster. The cluster is coordinated with 3 cysteines and an exchangeable S-adenosyl-L-methionine.</text>
</comment>
<comment type="subcellular location">
    <subcellularLocation>
        <location evidence="1">Cytoplasm</location>
    </subcellularLocation>
</comment>
<comment type="miscellaneous">
    <text evidence="1">Reaction proceeds by a ping-pong mechanism involving intermediate methylation of a conserved cysteine residue.</text>
</comment>
<comment type="similarity">
    <text evidence="1">Belongs to the radical SAM superfamily. RlmN family.</text>
</comment>
<name>RLMN_PROM2</name>